<feature type="signal peptide" evidence="1">
    <location>
        <begin position="1"/>
        <end position="34"/>
    </location>
</feature>
<feature type="chain" id="PRO_0000319004" description="Formin-like protein 14">
    <location>
        <begin position="35"/>
        <end position="830"/>
    </location>
</feature>
<feature type="transmembrane region" description="Helical" evidence="1">
    <location>
        <begin position="203"/>
        <end position="223"/>
    </location>
</feature>
<feature type="domain" description="FH2" evidence="2">
    <location>
        <begin position="390"/>
        <end position="823"/>
    </location>
</feature>
<feature type="region of interest" description="Disordered" evidence="3">
    <location>
        <begin position="40"/>
        <end position="195"/>
    </location>
</feature>
<feature type="region of interest" description="Disordered" evidence="3">
    <location>
        <begin position="235"/>
        <end position="446"/>
    </location>
</feature>
<feature type="compositionally biased region" description="Polar residues" evidence="3">
    <location>
        <begin position="40"/>
        <end position="59"/>
    </location>
</feature>
<feature type="compositionally biased region" description="Pro residues" evidence="3">
    <location>
        <begin position="61"/>
        <end position="86"/>
    </location>
</feature>
<feature type="compositionally biased region" description="Pro residues" evidence="3">
    <location>
        <begin position="95"/>
        <end position="135"/>
    </location>
</feature>
<feature type="compositionally biased region" description="Low complexity" evidence="3">
    <location>
        <begin position="149"/>
        <end position="160"/>
    </location>
</feature>
<feature type="compositionally biased region" description="Pro residues" evidence="3">
    <location>
        <begin position="314"/>
        <end position="323"/>
    </location>
</feature>
<feature type="compositionally biased region" description="Low complexity" evidence="3">
    <location>
        <begin position="324"/>
        <end position="369"/>
    </location>
</feature>
<feature type="compositionally biased region" description="Basic and acidic residues" evidence="3">
    <location>
        <begin position="424"/>
        <end position="446"/>
    </location>
</feature>
<protein>
    <recommendedName>
        <fullName>Formin-like protein 14</fullName>
    </recommendedName>
    <alternativeName>
        <fullName>OsFH14</fullName>
    </alternativeName>
</protein>
<keyword id="KW-0472">Membrane</keyword>
<keyword id="KW-1185">Reference proteome</keyword>
<keyword id="KW-0732">Signal</keyword>
<keyword id="KW-0812">Transmembrane</keyword>
<keyword id="KW-1133">Transmembrane helix</keyword>
<reference key="1">
    <citation type="journal article" date="2005" name="Mol. Genet. Genomics">
        <title>A fine physical map of the rice chromosome 5.</title>
        <authorList>
            <person name="Cheng C.-H."/>
            <person name="Chung M.C."/>
            <person name="Liu S.-M."/>
            <person name="Chen S.-K."/>
            <person name="Kao F.Y."/>
            <person name="Lin S.-J."/>
            <person name="Hsiao S.-H."/>
            <person name="Tseng I.C."/>
            <person name="Hsing Y.-I.C."/>
            <person name="Wu H.-P."/>
            <person name="Chen C.-S."/>
            <person name="Shaw J.-F."/>
            <person name="Wu J."/>
            <person name="Matsumoto T."/>
            <person name="Sasaki T."/>
            <person name="Chen H.-C."/>
            <person name="Chow T.-Y."/>
        </authorList>
    </citation>
    <scope>NUCLEOTIDE SEQUENCE [LARGE SCALE GENOMIC DNA]</scope>
    <source>
        <strain>cv. Nipponbare</strain>
    </source>
</reference>
<reference key="2">
    <citation type="journal article" date="2005" name="Nature">
        <title>The map-based sequence of the rice genome.</title>
        <authorList>
            <consortium name="International rice genome sequencing project (IRGSP)"/>
        </authorList>
    </citation>
    <scope>NUCLEOTIDE SEQUENCE [LARGE SCALE GENOMIC DNA]</scope>
    <source>
        <strain>cv. Nipponbare</strain>
    </source>
</reference>
<reference key="3">
    <citation type="journal article" date="2008" name="Nucleic Acids Res.">
        <title>The rice annotation project database (RAP-DB): 2008 update.</title>
        <authorList>
            <consortium name="The rice annotation project (RAP)"/>
        </authorList>
    </citation>
    <scope>GENOME REANNOTATION</scope>
    <source>
        <strain>cv. Nipponbare</strain>
    </source>
</reference>
<reference key="4">
    <citation type="journal article" date="2013" name="Rice">
        <title>Improvement of the Oryza sativa Nipponbare reference genome using next generation sequence and optical map data.</title>
        <authorList>
            <person name="Kawahara Y."/>
            <person name="de la Bastide M."/>
            <person name="Hamilton J.P."/>
            <person name="Kanamori H."/>
            <person name="McCombie W.R."/>
            <person name="Ouyang S."/>
            <person name="Schwartz D.C."/>
            <person name="Tanaka T."/>
            <person name="Wu J."/>
            <person name="Zhou S."/>
            <person name="Childs K.L."/>
            <person name="Davidson R.M."/>
            <person name="Lin H."/>
            <person name="Quesada-Ocampo L."/>
            <person name="Vaillancourt B."/>
            <person name="Sakai H."/>
            <person name="Lee S.S."/>
            <person name="Kim J."/>
            <person name="Numa H."/>
            <person name="Itoh T."/>
            <person name="Buell C.R."/>
            <person name="Matsumoto T."/>
        </authorList>
    </citation>
    <scope>GENOME REANNOTATION</scope>
    <source>
        <strain>cv. Nipponbare</strain>
    </source>
</reference>
<reference key="5">
    <citation type="journal article" date="2004" name="BMC Genomics">
        <title>Formin homology 2 domains occur in multiple contexts in angiosperms.</title>
        <authorList>
            <person name="Cvrckova F."/>
            <person name="Novotny M."/>
            <person name="Pickova D."/>
            <person name="Zarsky V."/>
        </authorList>
    </citation>
    <scope>GENE FAMILY</scope>
    <scope>NOMENCLATURE</scope>
</reference>
<organism>
    <name type="scientific">Oryza sativa subsp. japonica</name>
    <name type="common">Rice</name>
    <dbReference type="NCBI Taxonomy" id="39947"/>
    <lineage>
        <taxon>Eukaryota</taxon>
        <taxon>Viridiplantae</taxon>
        <taxon>Streptophyta</taxon>
        <taxon>Embryophyta</taxon>
        <taxon>Tracheophyta</taxon>
        <taxon>Spermatophyta</taxon>
        <taxon>Magnoliopsida</taxon>
        <taxon>Liliopsida</taxon>
        <taxon>Poales</taxon>
        <taxon>Poaceae</taxon>
        <taxon>BOP clade</taxon>
        <taxon>Oryzoideae</taxon>
        <taxon>Oryzeae</taxon>
        <taxon>Oryzinae</taxon>
        <taxon>Oryza</taxon>
        <taxon>Oryza sativa</taxon>
    </lineage>
</organism>
<dbReference type="EMBL" id="AC084818">
    <property type="protein sequence ID" value="AAW56932.1"/>
    <property type="status" value="ALT_INIT"/>
    <property type="molecule type" value="Genomic_DNA"/>
</dbReference>
<dbReference type="EMBL" id="AP008211">
    <property type="protein sequence ID" value="BAF16313.2"/>
    <property type="status" value="ALT_SEQ"/>
    <property type="molecule type" value="Genomic_DNA"/>
</dbReference>
<dbReference type="EMBL" id="AP014961">
    <property type="protein sequence ID" value="BAS91852.1"/>
    <property type="molecule type" value="Genomic_DNA"/>
</dbReference>
<dbReference type="RefSeq" id="XP_015637516.1">
    <property type="nucleotide sequence ID" value="XM_015782030.1"/>
</dbReference>
<dbReference type="SMR" id="Q0DLG0"/>
<dbReference type="STRING" id="39947.Q0DLG0"/>
<dbReference type="iPTMnet" id="Q0DLG0"/>
<dbReference type="PaxDb" id="39947-Q0DLG0"/>
<dbReference type="EnsemblPlants" id="Os05t0104000-00">
    <property type="protein sequence ID" value="Os05t0104000-00"/>
    <property type="gene ID" value="Os05g0104000"/>
</dbReference>
<dbReference type="Gramene" id="Os05t0104000-00">
    <property type="protein sequence ID" value="Os05t0104000-00"/>
    <property type="gene ID" value="Os05g0104000"/>
</dbReference>
<dbReference type="KEGG" id="dosa:Os05g0104000"/>
<dbReference type="eggNOG" id="KOG1922">
    <property type="taxonomic scope" value="Eukaryota"/>
</dbReference>
<dbReference type="HOGENOM" id="CLU_007699_0_0_1"/>
<dbReference type="InParanoid" id="Q0DLG0"/>
<dbReference type="OMA" id="HAHTTRR"/>
<dbReference type="OrthoDB" id="1104827at2759"/>
<dbReference type="Proteomes" id="UP000000763">
    <property type="component" value="Chromosome 5"/>
</dbReference>
<dbReference type="Proteomes" id="UP000059680">
    <property type="component" value="Chromosome 5"/>
</dbReference>
<dbReference type="GO" id="GO:0005856">
    <property type="term" value="C:cytoskeleton"/>
    <property type="evidence" value="ECO:0000318"/>
    <property type="project" value="GO_Central"/>
</dbReference>
<dbReference type="GO" id="GO:0016020">
    <property type="term" value="C:membrane"/>
    <property type="evidence" value="ECO:0007669"/>
    <property type="project" value="UniProtKB-SubCell"/>
</dbReference>
<dbReference type="GO" id="GO:0051015">
    <property type="term" value="F:actin filament binding"/>
    <property type="evidence" value="ECO:0000318"/>
    <property type="project" value="GO_Central"/>
</dbReference>
<dbReference type="GO" id="GO:0030036">
    <property type="term" value="P:actin cytoskeleton organization"/>
    <property type="evidence" value="ECO:0000318"/>
    <property type="project" value="GO_Central"/>
</dbReference>
<dbReference type="GO" id="GO:0045010">
    <property type="term" value="P:actin nucleation"/>
    <property type="evidence" value="ECO:0007669"/>
    <property type="project" value="InterPro"/>
</dbReference>
<dbReference type="Gene3D" id="1.20.58.2220">
    <property type="entry name" value="Formin, FH2 domain"/>
    <property type="match status" value="1"/>
</dbReference>
<dbReference type="InterPro" id="IPR015425">
    <property type="entry name" value="FH2_Formin"/>
</dbReference>
<dbReference type="InterPro" id="IPR042201">
    <property type="entry name" value="FH2_Formin_sf"/>
</dbReference>
<dbReference type="InterPro" id="IPR027643">
    <property type="entry name" value="Formin-like_plant"/>
</dbReference>
<dbReference type="PANTHER" id="PTHR23213:SF347">
    <property type="entry name" value="FORMIN-LIKE PROTEIN 14"/>
    <property type="match status" value="1"/>
</dbReference>
<dbReference type="PANTHER" id="PTHR23213">
    <property type="entry name" value="FORMIN-RELATED"/>
    <property type="match status" value="1"/>
</dbReference>
<dbReference type="Pfam" id="PF02181">
    <property type="entry name" value="FH2"/>
    <property type="match status" value="1"/>
</dbReference>
<dbReference type="PRINTS" id="PR01217">
    <property type="entry name" value="PRICHEXTENSN"/>
</dbReference>
<dbReference type="SMART" id="SM00498">
    <property type="entry name" value="FH2"/>
    <property type="match status" value="1"/>
</dbReference>
<dbReference type="SUPFAM" id="SSF101447">
    <property type="entry name" value="Formin homology 2 domain (FH2 domain)"/>
    <property type="match status" value="1"/>
</dbReference>
<dbReference type="PROSITE" id="PS51444">
    <property type="entry name" value="FH2"/>
    <property type="match status" value="1"/>
</dbReference>
<sequence length="830" mass="90222">MAMAMAMPSSSPPLFFSLLNLMLLLLLLAPYCSAVSVPNNNTHHRSSSPTQTTLQQLHSPDSPPPPPLPTPTVTTPTPPPPPPAPRPPRRHHRIPPPPPPLLPTPPPPPASISPTPAPPLPPPPAPAPPPTPTPKFPSSSANPSPPDAYPFTNYPFFPNFAAPPPPTQQQQQQPSGDGGLPTFPANISTLVHPTQRPPRRFPVLQALLLSFLSLCLLLLSALLSLHLFRRLRHRHHSHSHPNARSPSSRSGATNHHHDDDGDGDEEGRRLKPPPMPTSSSNPSTEFLYLGTLAAPPQQPPPTTSHLRPGSPELRPLPPLPRVGPPSGEFASRSSASDPSTAPPAAAEASSSSLSPSSPSASSPTLGSSPVHLRPPSIPQPRGRAPNPSPPKRRPQPPEPMAAHAWNPFVPMPPQAPPSEEEEEHSPSEKSMRKSRPLHSDKLKPGSLHMKDEMIHLYLNNSMAAAMPREVCLLGAPRCHGIGMLVGALGISKEQVREAILEGNAHGLGVEALRMLMQMVLTNEEELKLKYFKDDLSTKLCPVEAFLKAVLDIPFAFKRMDAMLYVANFYLEVNQLRMSYATLEAACQELKNSRLFHKVLEAVLNFGNLMSIDTGSPNSHAMEPNTLLKIVDVKGADGKAALLQFVVHEIVKPEGHSPVCKTNANTTQQYDVEYRKHGLQVVSKLAAELSNTKKASSIDMMKLSRDVSELGVGLGKIHDVLRLNSMVTSADSARRFHNTMSMFLRQAEEEILKLQAQESICLSCVKEVTEYFHGELSSGDEGHMARVFGSVREFLAMLDRICKEAGEEMKSSGWMMGRDWNMAAPMGMTTP</sequence>
<accession>Q0DLG0</accession>
<accession>A0A0P0WGV1</accession>
<accession>Q5KQN9</accession>
<proteinExistence type="evidence at transcript level"/>
<comment type="subcellular location">
    <subcellularLocation>
        <location evidence="4">Membrane</location>
        <topology evidence="4">Single-pass membrane protein</topology>
    </subcellularLocation>
</comment>
<comment type="similarity">
    <text evidence="4">Belongs to the formin-like family. Class-I subfamily.</text>
</comment>
<comment type="sequence caution" evidence="4">
    <conflict type="erroneous initiation">
        <sequence resource="EMBL-CDS" id="AAW56932"/>
    </conflict>
</comment>
<comment type="sequence caution" evidence="4">
    <conflict type="erroneous gene model prediction">
        <sequence resource="EMBL-CDS" id="BAF16313"/>
    </conflict>
</comment>
<evidence type="ECO:0000255" key="1"/>
<evidence type="ECO:0000255" key="2">
    <source>
        <dbReference type="PROSITE-ProRule" id="PRU00774"/>
    </source>
</evidence>
<evidence type="ECO:0000256" key="3">
    <source>
        <dbReference type="SAM" id="MobiDB-lite"/>
    </source>
</evidence>
<evidence type="ECO:0000305" key="4"/>
<gene>
    <name type="primary">FH14</name>
    <name type="ordered locus">Os05g0104000</name>
    <name type="ordered locus">LOC_Os05g01350</name>
    <name type="ORF">P0668H12.11</name>
</gene>
<name>FH14_ORYSJ</name>